<reference key="1">
    <citation type="journal article" date="1997" name="Science">
        <title>Epidermal cell differentiation in Arabidopsis determined by a Myb homolog, CPC.</title>
        <authorList>
            <person name="Wada T."/>
            <person name="Tachibana T."/>
            <person name="Shimura Y."/>
            <person name="Okada K."/>
        </authorList>
    </citation>
    <scope>NUCLEOTIDE SEQUENCE [MRNA]</scope>
    <scope>FUNCTION</scope>
    <source>
        <strain>cv. Wassilewskija</strain>
        <tissue>Root</tissue>
    </source>
</reference>
<reference key="2">
    <citation type="submission" date="2004-01" db="EMBL/GenBank/DDBJ databases">
        <title>The MYB transcription factor family in Arabidopsis: a genome-wide cloning and expression pattern analysis.</title>
        <authorList>
            <person name="Qu L.-J."/>
            <person name="Gu H."/>
        </authorList>
    </citation>
    <scope>NUCLEOTIDE SEQUENCE [MRNA]</scope>
</reference>
<reference key="3">
    <citation type="journal article" date="1999" name="Nature">
        <title>Sequence and analysis of chromosome 2 of the plant Arabidopsis thaliana.</title>
        <authorList>
            <person name="Lin X."/>
            <person name="Kaul S."/>
            <person name="Rounsley S.D."/>
            <person name="Shea T.P."/>
            <person name="Benito M.-I."/>
            <person name="Town C.D."/>
            <person name="Fujii C.Y."/>
            <person name="Mason T.M."/>
            <person name="Bowman C.L."/>
            <person name="Barnstead M.E."/>
            <person name="Feldblyum T.V."/>
            <person name="Buell C.R."/>
            <person name="Ketchum K.A."/>
            <person name="Lee J.J."/>
            <person name="Ronning C.M."/>
            <person name="Koo H.L."/>
            <person name="Moffat K.S."/>
            <person name="Cronin L.A."/>
            <person name="Shen M."/>
            <person name="Pai G."/>
            <person name="Van Aken S."/>
            <person name="Umayam L."/>
            <person name="Tallon L.J."/>
            <person name="Gill J.E."/>
            <person name="Adams M.D."/>
            <person name="Carrera A.J."/>
            <person name="Creasy T.H."/>
            <person name="Goodman H.M."/>
            <person name="Somerville C.R."/>
            <person name="Copenhaver G.P."/>
            <person name="Preuss D."/>
            <person name="Nierman W.C."/>
            <person name="White O."/>
            <person name="Eisen J.A."/>
            <person name="Salzberg S.L."/>
            <person name="Fraser C.M."/>
            <person name="Venter J.C."/>
        </authorList>
    </citation>
    <scope>NUCLEOTIDE SEQUENCE [LARGE SCALE GENOMIC DNA]</scope>
    <source>
        <strain>cv. Columbia</strain>
    </source>
</reference>
<reference key="4">
    <citation type="journal article" date="2017" name="Plant J.">
        <title>Araport11: a complete reannotation of the Arabidopsis thaliana reference genome.</title>
        <authorList>
            <person name="Cheng C.Y."/>
            <person name="Krishnakumar V."/>
            <person name="Chan A.P."/>
            <person name="Thibaud-Nissen F."/>
            <person name="Schobel S."/>
            <person name="Town C.D."/>
        </authorList>
    </citation>
    <scope>GENOME REANNOTATION</scope>
    <source>
        <strain>cv. Columbia</strain>
    </source>
</reference>
<reference key="5">
    <citation type="journal article" date="2003" name="Science">
        <title>Empirical analysis of transcriptional activity in the Arabidopsis genome.</title>
        <authorList>
            <person name="Yamada K."/>
            <person name="Lim J."/>
            <person name="Dale J.M."/>
            <person name="Chen H."/>
            <person name="Shinn P."/>
            <person name="Palm C.J."/>
            <person name="Southwick A.M."/>
            <person name="Wu H.C."/>
            <person name="Kim C.J."/>
            <person name="Nguyen M."/>
            <person name="Pham P.K."/>
            <person name="Cheuk R.F."/>
            <person name="Karlin-Newmann G."/>
            <person name="Liu S.X."/>
            <person name="Lam B."/>
            <person name="Sakano H."/>
            <person name="Wu T."/>
            <person name="Yu G."/>
            <person name="Miranda M."/>
            <person name="Quach H.L."/>
            <person name="Tripp M."/>
            <person name="Chang C.H."/>
            <person name="Lee J.M."/>
            <person name="Toriumi M.J."/>
            <person name="Chan M.M."/>
            <person name="Tang C.C."/>
            <person name="Onodera C.S."/>
            <person name="Deng J.M."/>
            <person name="Akiyama K."/>
            <person name="Ansari Y."/>
            <person name="Arakawa T."/>
            <person name="Banh J."/>
            <person name="Banno F."/>
            <person name="Bowser L."/>
            <person name="Brooks S.Y."/>
            <person name="Carninci P."/>
            <person name="Chao Q."/>
            <person name="Choy N."/>
            <person name="Enju A."/>
            <person name="Goldsmith A.D."/>
            <person name="Gurjal M."/>
            <person name="Hansen N.F."/>
            <person name="Hayashizaki Y."/>
            <person name="Johnson-Hopson C."/>
            <person name="Hsuan V.W."/>
            <person name="Iida K."/>
            <person name="Karnes M."/>
            <person name="Khan S."/>
            <person name="Koesema E."/>
            <person name="Ishida J."/>
            <person name="Jiang P.X."/>
            <person name="Jones T."/>
            <person name="Kawai J."/>
            <person name="Kamiya A."/>
            <person name="Meyers C."/>
            <person name="Nakajima M."/>
            <person name="Narusaka M."/>
            <person name="Seki M."/>
            <person name="Sakurai T."/>
            <person name="Satou M."/>
            <person name="Tamse R."/>
            <person name="Vaysberg M."/>
            <person name="Wallender E.K."/>
            <person name="Wong C."/>
            <person name="Yamamura Y."/>
            <person name="Yuan S."/>
            <person name="Shinozaki K."/>
            <person name="Davis R.W."/>
            <person name="Theologis A."/>
            <person name="Ecker J.R."/>
        </authorList>
    </citation>
    <scope>NUCLEOTIDE SEQUENCE [LARGE SCALE MRNA]</scope>
    <source>
        <strain>cv. Columbia</strain>
    </source>
</reference>
<reference key="6">
    <citation type="journal article" date="2002" name="EMBO J.">
        <title>TRIPTYCHON and CAPRICE mediate lateral inhibition during trichome and root hair patterning in Arabidopsis.</title>
        <authorList>
            <person name="Schellmann S."/>
            <person name="Schnittger A."/>
            <person name="Kirik V."/>
            <person name="Wada T."/>
            <person name="Okada K."/>
            <person name="Beermann A."/>
            <person name="Thumfahrt J."/>
            <person name="Juergens G."/>
            <person name="Huelskamp M."/>
        </authorList>
    </citation>
    <scope>FUNCTION</scope>
    <scope>DEVELOPMENTAL STAGE</scope>
</reference>
<reference key="7">
    <citation type="journal article" date="2002" name="Plant Cell">
        <title>Cell pattern in the Arabidopsis root epidermis determined by lateral inhibition with feedback.</title>
        <authorList>
            <person name="Lee M.M."/>
            <person name="Schiefelbein J."/>
        </authorList>
    </citation>
    <scope>FUNCTION</scope>
    <scope>INDUCTION</scope>
</reference>
<reference key="8">
    <citation type="journal article" date="2003" name="Development">
        <title>A network of redundant bHLH proteins functions in all TTG1-dependent pathways of Arabidopsis.</title>
        <authorList>
            <person name="Zhang F."/>
            <person name="Gonzalez A."/>
            <person name="Zhao M."/>
            <person name="Payne C.T."/>
            <person name="Lloyd A.M."/>
        </authorList>
    </citation>
    <scope>INTERACTION WITH BHLH2</scope>
</reference>
<reference key="9">
    <citation type="journal article" date="2003" name="Development">
        <title>The bHLH genes GLABRA3 (GL3) and ENHANCER OF GLABRA3 (EGL3) specify epidermal cell fate in the Arabidopsis root.</title>
        <authorList>
            <person name="Bernhardt C."/>
            <person name="Lee M.M."/>
            <person name="Gonzalez A."/>
            <person name="Zhang F."/>
            <person name="Lloyd A.M."/>
            <person name="Schiefelbein J."/>
        </authorList>
    </citation>
    <scope>INTERACTION WITH GL3 AND BHLH2</scope>
</reference>
<reference key="10">
    <citation type="journal article" date="2005" name="Development">
        <title>The WEREWOLF MYB protein directly regulates CAPRICE transcription during cell fate specification in the Arabidopsis root epidermis.</title>
        <authorList>
            <person name="Ryu K.H."/>
            <person name="Kang Y.H."/>
            <person name="Park Y.-H."/>
            <person name="Hwang I."/>
            <person name="Schiefelbein J."/>
            <person name="Lee M.M."/>
        </authorList>
    </citation>
    <scope>INDUCTION BY WER</scope>
</reference>
<reference key="11">
    <citation type="journal article" date="2005" name="Development">
        <title>Cell-to-cell movement of the CAPRICE protein in Arabidopsis root epidermal cell differentiation.</title>
        <authorList>
            <person name="Kurata T."/>
            <person name="Ishida T."/>
            <person name="Kawabata-Awai C."/>
            <person name="Noguchi M."/>
            <person name="Hattori S."/>
            <person name="Sano R."/>
            <person name="Nagasaka R."/>
            <person name="Tominaga R."/>
            <person name="Koshino-Kimura Y."/>
            <person name="Kato T."/>
            <person name="Sato S."/>
            <person name="Tabata S."/>
            <person name="Okada K."/>
            <person name="Wada T."/>
        </authorList>
    </citation>
    <scope>FUNCTION</scope>
    <scope>SUBCELLULAR LOCATION</scope>
    <scope>DOMAINS S1 AND S2 REGIONS</scope>
    <scope>TISSUE SPECIFICITY</scope>
    <scope>MUTAGENESIS OF TRP-76 AND MET-78</scope>
</reference>
<reference key="12">
    <citation type="journal article" date="2005" name="Plant Cell Physiol.">
        <title>Regulation of CAPRICE transcription by MYB proteins for root epidermis differentiation in Arabidopsis.</title>
        <authorList>
            <person name="Koshino-Kimura Y."/>
            <person name="Wada T."/>
            <person name="Tachibana T."/>
            <person name="Tsugeki R."/>
            <person name="Ishiguro S."/>
            <person name="Okada K."/>
        </authorList>
    </citation>
    <scope>TISSUE SPECIFICITY</scope>
    <scope>AUTOREGULATION</scope>
    <scope>INDUCTION BY WER</scope>
</reference>
<reference key="13">
    <citation type="journal article" date="2005" name="Proc. Natl. Acad. Sci. U.S.A.">
        <title>Histone acetylation affects expression of cellular patterning genes in the Arabidopsis root epidermis.</title>
        <authorList>
            <person name="Xu C.-R."/>
            <person name="Liu C."/>
            <person name="Wang Y.-L."/>
            <person name="Li L.-C."/>
            <person name="Chen W.-Q."/>
            <person name="Xu Z.-H."/>
            <person name="Bai S.-N."/>
        </authorList>
    </citation>
    <scope>INDUCTION BY HDA18</scope>
</reference>
<reference key="14">
    <citation type="journal article" date="2006" name="Plant Mol. Biol.">
        <title>The MYB transcription factor superfamily of Arabidopsis: expression analysis and phylogenetic comparison with the rice MYB family.</title>
        <authorList>
            <person name="Chen Y."/>
            <person name="Yang X."/>
            <person name="He K."/>
            <person name="Liu M."/>
            <person name="Li J."/>
            <person name="Gao Z."/>
            <person name="Lin Z."/>
            <person name="Zhang Y."/>
            <person name="Wang X."/>
            <person name="Qiu X."/>
            <person name="Shen Y."/>
            <person name="Zhang L."/>
            <person name="Deng X."/>
            <person name="Luo J."/>
            <person name="Deng X.-W."/>
            <person name="Chen Z."/>
            <person name="Gu H."/>
            <person name="Qu L.-J."/>
        </authorList>
    </citation>
    <scope>GENE FAMILY</scope>
</reference>
<reference key="15">
    <citation type="journal article" date="2007" name="Nature">
        <title>A chromatin link that couples cell division to root epidermis patterning in Arabidopsis.</title>
        <authorList>
            <person name="Caro E."/>
            <person name="Castellano M.M."/>
            <person name="Gutierrez C."/>
        </authorList>
    </citation>
    <scope>INDUCTION</scope>
</reference>
<reference key="16">
    <citation type="journal article" date="2008" name="Plant Signal. Behav.">
        <title>CAPRICE positively regulates stomatal formation in the Arabidopsis hypocotyl.</title>
        <authorList>
            <person name="Serna L."/>
        </authorList>
    </citation>
    <scope>FUNCTION</scope>
    <scope>INDUCTION</scope>
</reference>
<reference key="17">
    <citation type="journal article" date="2011" name="Curr. Biol.">
        <title>An essential protein that interacts with endosomes and promotes movement of the SHORT-ROOT transcription factor.</title>
        <authorList>
            <person name="Koizumi K."/>
            <person name="Wu S."/>
            <person name="MacRae-Crerar A."/>
            <person name="Gallagher K.L."/>
        </authorList>
    </citation>
    <scope>INTERACTION WITH SIEL</scope>
</reference>
<name>CPC_ARATH</name>
<organism>
    <name type="scientific">Arabidopsis thaliana</name>
    <name type="common">Mouse-ear cress</name>
    <dbReference type="NCBI Taxonomy" id="3702"/>
    <lineage>
        <taxon>Eukaryota</taxon>
        <taxon>Viridiplantae</taxon>
        <taxon>Streptophyta</taxon>
        <taxon>Embryophyta</taxon>
        <taxon>Tracheophyta</taxon>
        <taxon>Spermatophyta</taxon>
        <taxon>Magnoliopsida</taxon>
        <taxon>eudicotyledons</taxon>
        <taxon>Gunneridae</taxon>
        <taxon>Pentapetalae</taxon>
        <taxon>rosids</taxon>
        <taxon>malvids</taxon>
        <taxon>Brassicales</taxon>
        <taxon>Brassicaceae</taxon>
        <taxon>Camelineae</taxon>
        <taxon>Arabidopsis</taxon>
    </lineage>
</organism>
<feature type="chain" id="PRO_0000234362" description="Transcription factor CPC">
    <location>
        <begin position="1"/>
        <end position="94"/>
    </location>
</feature>
<feature type="domain" description="Myb-like">
    <location>
        <begin position="30"/>
        <end position="80"/>
    </location>
</feature>
<feature type="region of interest" description="Disordered" evidence="1">
    <location>
        <begin position="1"/>
        <end position="25"/>
    </location>
</feature>
<feature type="region of interest" description="S1, required for cell-to-cell movements">
    <location>
        <begin position="1"/>
        <end position="10"/>
    </location>
</feature>
<feature type="region of interest" description="S2, required for cell-to-cell movements and nuclear localization">
    <location>
        <begin position="76"/>
        <end position="79"/>
    </location>
</feature>
<feature type="compositionally biased region" description="Basic and acidic residues" evidence="1">
    <location>
        <begin position="1"/>
        <end position="11"/>
    </location>
</feature>
<feature type="mutagenesis site" description="Loss of cell-to-cell movement and of nuclear localization." evidence="9">
    <original>W</original>
    <variation>A</variation>
    <location>
        <position position="76"/>
    </location>
</feature>
<feature type="mutagenesis site" description="Loss of cell-to-cell movement." evidence="9">
    <original>M</original>
    <variation>A</variation>
    <location>
        <position position="78"/>
    </location>
</feature>
<feature type="helix" evidence="14">
    <location>
        <begin position="40"/>
        <end position="53"/>
    </location>
</feature>
<feature type="helix" evidence="14">
    <location>
        <begin position="57"/>
        <end position="61"/>
    </location>
</feature>
<feature type="helix" evidence="14">
    <location>
        <begin position="69"/>
        <end position="79"/>
    </location>
</feature>
<comment type="function">
    <text evidence="2 3 9 11 13">Transcription factor. Determines the fate of epidermal cell differentiation. Represses trichome development by lateral inhibition. Together with GL3 or BHLH2, promotes the formation of hair developing cells (H position) in root epidermis, probably by inhibiting non-hair cell formation. Represses the expression of GL2 and WER in H cells. Positively regulates stomatal formation in the hypocotyl (PubMed:19513241).</text>
</comment>
<comment type="subunit">
    <text evidence="4 5 12">Interacts with GL3 and BHLH2. Interacts with SIEL (PubMed:21924907).</text>
</comment>
<comment type="interaction">
    <interactant intactId="EBI-533386">
        <id>O22059</id>
    </interactant>
    <interactant intactId="EBI-533398">
        <id>Q9CAD0</id>
        <label>BHLH2</label>
    </interactant>
    <organismsDiffer>false</organismsDiffer>
    <experiments>3</experiments>
</comment>
<comment type="subcellular location">
    <subcellularLocation>
        <location evidence="9">Nucleus</location>
    </subcellularLocation>
    <text>Moves from developing non-hair cells (atrichoblasts) to developing hair cells (trichoblasts).</text>
</comment>
<comment type="tissue specificity">
    <text evidence="6 9">Expressed in trichomes and in young developing leaves, as well as in root hair and stele cells (pericycle and vascular tissues). Expressed in epidermal root hairless cells (atrichoblasts) and moves to root hair cells (trichoblasts) by a cell-to-cell movement through plasmodesmata (at protein level).</text>
</comment>
<comment type="developmental stage">
    <text evidence="3">Expressed in leaves primordia and later confined to trichomes.</text>
</comment>
<comment type="induction">
    <text evidence="2 6 7 8 10 11">Transcriptional repression correlates with reduced histone acetylation on H3 and H4 mediated by HDA18 in root epidermis N cells (non-hair developing cells). Induced by WER. Negative autoregulation by interfering with the binding of WER to its WER-binding sites (WBS) promoter region, especially in H cells. Down-regulated by GEM. Down-regulated by TMM (PubMed:19513241).</text>
</comment>
<sequence length="94" mass="11385">MFRSDKAEKMDKRRRRQSKAKASCSEEVSSIEWEAVKMSEEEEDLISRMYKLVGDRWELIAGRIPGRTPEEIERYWLMKHGVVFANRRRDFFRK</sequence>
<protein>
    <recommendedName>
        <fullName>Transcription factor CPC</fullName>
    </recommendedName>
    <alternativeName>
        <fullName>Protein CAPRICE</fullName>
    </alternativeName>
</protein>
<gene>
    <name type="primary">CPC</name>
    <name type="ordered locus">At2g46410</name>
    <name type="ORF">F11C10.10</name>
</gene>
<evidence type="ECO:0000256" key="1">
    <source>
        <dbReference type="SAM" id="MobiDB-lite"/>
    </source>
</evidence>
<evidence type="ECO:0000269" key="2">
    <source>
    </source>
</evidence>
<evidence type="ECO:0000269" key="3">
    <source>
    </source>
</evidence>
<evidence type="ECO:0000269" key="4">
    <source>
    </source>
</evidence>
<evidence type="ECO:0000269" key="5">
    <source>
    </source>
</evidence>
<evidence type="ECO:0000269" key="6">
    <source>
    </source>
</evidence>
<evidence type="ECO:0000269" key="7">
    <source>
    </source>
</evidence>
<evidence type="ECO:0000269" key="8">
    <source>
    </source>
</evidence>
<evidence type="ECO:0000269" key="9">
    <source>
    </source>
</evidence>
<evidence type="ECO:0000269" key="10">
    <source>
    </source>
</evidence>
<evidence type="ECO:0000269" key="11">
    <source>
    </source>
</evidence>
<evidence type="ECO:0000269" key="12">
    <source>
    </source>
</evidence>
<evidence type="ECO:0000269" key="13">
    <source>
    </source>
</evidence>
<evidence type="ECO:0007829" key="14">
    <source>
        <dbReference type="PDB" id="7FDO"/>
    </source>
</evidence>
<keyword id="KW-0002">3D-structure</keyword>
<keyword id="KW-0217">Developmental protein</keyword>
<keyword id="KW-0238">DNA-binding</keyword>
<keyword id="KW-0539">Nucleus</keyword>
<keyword id="KW-1185">Reference proteome</keyword>
<keyword id="KW-0678">Repressor</keyword>
<keyword id="KW-0804">Transcription</keyword>
<keyword id="KW-0805">Transcription regulation</keyword>
<proteinExistence type="evidence at protein level"/>
<accession>O22059</accession>
<dbReference type="EMBL" id="AB004871">
    <property type="protein sequence ID" value="BAA21917.1"/>
    <property type="molecule type" value="mRNA"/>
</dbReference>
<dbReference type="EMBL" id="AY519521">
    <property type="protein sequence ID" value="AAS09991.1"/>
    <property type="molecule type" value="mRNA"/>
</dbReference>
<dbReference type="EMBL" id="AC006526">
    <property type="protein sequence ID" value="AAD23043.1"/>
    <property type="molecule type" value="Genomic_DNA"/>
</dbReference>
<dbReference type="EMBL" id="CP002685">
    <property type="protein sequence ID" value="AEC10691.1"/>
    <property type="molecule type" value="Genomic_DNA"/>
</dbReference>
<dbReference type="EMBL" id="AY074637">
    <property type="protein sequence ID" value="AAL69453.1"/>
    <property type="molecule type" value="mRNA"/>
</dbReference>
<dbReference type="PIR" id="E84902">
    <property type="entry name" value="E84902"/>
</dbReference>
<dbReference type="RefSeq" id="NP_182164.1">
    <property type="nucleotide sequence ID" value="NM_130205.2"/>
</dbReference>
<dbReference type="PDB" id="7FDO">
    <property type="method" value="X-ray"/>
    <property type="resolution" value="1.75 A"/>
    <property type="chains" value="B=36-94"/>
</dbReference>
<dbReference type="PDBsum" id="7FDO"/>
<dbReference type="SMR" id="O22059"/>
<dbReference type="BioGRID" id="4584">
    <property type="interactions" value="5"/>
</dbReference>
<dbReference type="FunCoup" id="O22059">
    <property type="interactions" value="38"/>
</dbReference>
<dbReference type="IntAct" id="O22059">
    <property type="interactions" value="5"/>
</dbReference>
<dbReference type="STRING" id="3702.O22059"/>
<dbReference type="PaxDb" id="3702-AT2G46410.1"/>
<dbReference type="ProteomicsDB" id="220410"/>
<dbReference type="EnsemblPlants" id="AT2G46410.1">
    <property type="protein sequence ID" value="AT2G46410.1"/>
    <property type="gene ID" value="AT2G46410"/>
</dbReference>
<dbReference type="GeneID" id="819249"/>
<dbReference type="Gramene" id="AT2G46410.1">
    <property type="protein sequence ID" value="AT2G46410.1"/>
    <property type="gene ID" value="AT2G46410"/>
</dbReference>
<dbReference type="KEGG" id="ath:AT2G46410"/>
<dbReference type="Araport" id="AT2G46410"/>
<dbReference type="TAIR" id="AT2G46410">
    <property type="gene designation" value="CPC"/>
</dbReference>
<dbReference type="eggNOG" id="ENOG502S4DP">
    <property type="taxonomic scope" value="Eukaryota"/>
</dbReference>
<dbReference type="HOGENOM" id="CLU_178021_1_0_1"/>
<dbReference type="InParanoid" id="O22059"/>
<dbReference type="OMA" id="HELFANT"/>
<dbReference type="OrthoDB" id="1077569at2759"/>
<dbReference type="PhylomeDB" id="O22059"/>
<dbReference type="PRO" id="PR:O22059"/>
<dbReference type="Proteomes" id="UP000006548">
    <property type="component" value="Chromosome 2"/>
</dbReference>
<dbReference type="ExpressionAtlas" id="O22059">
    <property type="expression patterns" value="baseline and differential"/>
</dbReference>
<dbReference type="GO" id="GO:0005634">
    <property type="term" value="C:nucleus"/>
    <property type="evidence" value="ECO:0000314"/>
    <property type="project" value="TAIR"/>
</dbReference>
<dbReference type="GO" id="GO:0003677">
    <property type="term" value="F:DNA binding"/>
    <property type="evidence" value="ECO:0007669"/>
    <property type="project" value="UniProtKB-KW"/>
</dbReference>
<dbReference type="GO" id="GO:0003700">
    <property type="term" value="F:DNA-binding transcription factor activity"/>
    <property type="evidence" value="ECO:0000250"/>
    <property type="project" value="TAIR"/>
</dbReference>
<dbReference type="GO" id="GO:0009913">
    <property type="term" value="P:epidermal cell differentiation"/>
    <property type="evidence" value="ECO:0000315"/>
    <property type="project" value="TAIR"/>
</dbReference>
<dbReference type="GO" id="GO:0010063">
    <property type="term" value="P:positive regulation of trichoblast fate specification"/>
    <property type="evidence" value="ECO:0000315"/>
    <property type="project" value="TAIR"/>
</dbReference>
<dbReference type="GO" id="GO:0010376">
    <property type="term" value="P:stomatal complex formation"/>
    <property type="evidence" value="ECO:0000315"/>
    <property type="project" value="UniProtKB"/>
</dbReference>
<dbReference type="CDD" id="cd00167">
    <property type="entry name" value="SANT"/>
    <property type="match status" value="1"/>
</dbReference>
<dbReference type="FunFam" id="1.10.10.60:FF:000160">
    <property type="entry name" value="MYB-like transcription factor"/>
    <property type="match status" value="1"/>
</dbReference>
<dbReference type="Gene3D" id="1.10.10.60">
    <property type="entry name" value="Homeodomain-like"/>
    <property type="match status" value="1"/>
</dbReference>
<dbReference type="InterPro" id="IPR009057">
    <property type="entry name" value="Homeodomain-like_sf"/>
</dbReference>
<dbReference type="InterPro" id="IPR017930">
    <property type="entry name" value="Myb_dom"/>
</dbReference>
<dbReference type="InterPro" id="IPR015495">
    <property type="entry name" value="Myb_TF_plants"/>
</dbReference>
<dbReference type="InterPro" id="IPR001005">
    <property type="entry name" value="SANT/Myb"/>
</dbReference>
<dbReference type="PANTHER" id="PTHR47998:SF12">
    <property type="entry name" value="TRANSCRIPTION FACTOR CPC"/>
    <property type="match status" value="1"/>
</dbReference>
<dbReference type="PANTHER" id="PTHR47998">
    <property type="entry name" value="TRANSCRIPTION FACTOR MYB51-LIKE ISOFORM X1"/>
    <property type="match status" value="1"/>
</dbReference>
<dbReference type="Pfam" id="PF00249">
    <property type="entry name" value="Myb_DNA-binding"/>
    <property type="match status" value="1"/>
</dbReference>
<dbReference type="SMART" id="SM00717">
    <property type="entry name" value="SANT"/>
    <property type="match status" value="1"/>
</dbReference>
<dbReference type="SUPFAM" id="SSF46689">
    <property type="entry name" value="Homeodomain-like"/>
    <property type="match status" value="1"/>
</dbReference>